<protein>
    <recommendedName>
        <fullName evidence="1">Nicotinate phosphoribosyltransferase</fullName>
        <shortName evidence="1">NAPRTase</shortName>
        <ecNumber evidence="1">6.3.4.21</ecNumber>
    </recommendedName>
</protein>
<name>PNCB_NEIG1</name>
<dbReference type="EC" id="6.3.4.21" evidence="1"/>
<dbReference type="EMBL" id="AE004969">
    <property type="protein sequence ID" value="AAW89651.2"/>
    <property type="molecule type" value="Genomic_DNA"/>
</dbReference>
<dbReference type="RefSeq" id="WP_010358295.1">
    <property type="nucleotide sequence ID" value="NC_002946.2"/>
</dbReference>
<dbReference type="SMR" id="Q5F836"/>
<dbReference type="STRING" id="242231.NGO_0962"/>
<dbReference type="GeneID" id="66753285"/>
<dbReference type="KEGG" id="ngo:NGO_0962"/>
<dbReference type="HOGENOM" id="CLU_030991_1_0_4"/>
<dbReference type="UniPathway" id="UPA00253">
    <property type="reaction ID" value="UER00457"/>
</dbReference>
<dbReference type="Proteomes" id="UP000000535">
    <property type="component" value="Chromosome"/>
</dbReference>
<dbReference type="GO" id="GO:0005829">
    <property type="term" value="C:cytosol"/>
    <property type="evidence" value="ECO:0007669"/>
    <property type="project" value="TreeGrafter"/>
</dbReference>
<dbReference type="GO" id="GO:0004516">
    <property type="term" value="F:nicotinate phosphoribosyltransferase activity"/>
    <property type="evidence" value="ECO:0007669"/>
    <property type="project" value="UniProtKB-UniRule"/>
</dbReference>
<dbReference type="GO" id="GO:0034355">
    <property type="term" value="P:NAD biosynthetic process via the salvage pathway"/>
    <property type="evidence" value="ECO:0007669"/>
    <property type="project" value="TreeGrafter"/>
</dbReference>
<dbReference type="CDD" id="cd01401">
    <property type="entry name" value="PncB_like"/>
    <property type="match status" value="1"/>
</dbReference>
<dbReference type="FunFam" id="3.20.140.10:FF:000008">
    <property type="entry name" value="Nicotinate phosphoribosyltransferase"/>
    <property type="match status" value="1"/>
</dbReference>
<dbReference type="Gene3D" id="3.20.140.10">
    <property type="entry name" value="nicotinate phosphoribosyltransferase"/>
    <property type="match status" value="1"/>
</dbReference>
<dbReference type="HAMAP" id="MF_00570">
    <property type="entry name" value="NAPRTase"/>
    <property type="match status" value="1"/>
</dbReference>
<dbReference type="InterPro" id="IPR041525">
    <property type="entry name" value="N/Namide_PRibTrfase"/>
</dbReference>
<dbReference type="InterPro" id="IPR040727">
    <property type="entry name" value="NAPRTase_N"/>
</dbReference>
<dbReference type="InterPro" id="IPR006406">
    <property type="entry name" value="Nic_PRibTrfase"/>
</dbReference>
<dbReference type="InterPro" id="IPR007229">
    <property type="entry name" value="Nic_PRibTrfase-Fam"/>
</dbReference>
<dbReference type="InterPro" id="IPR036068">
    <property type="entry name" value="Nicotinate_pribotase-like_C"/>
</dbReference>
<dbReference type="NCBIfam" id="TIGR01514">
    <property type="entry name" value="NAPRTase"/>
    <property type="match status" value="1"/>
</dbReference>
<dbReference type="NCBIfam" id="NF003704">
    <property type="entry name" value="PRK05321.1"/>
    <property type="match status" value="1"/>
</dbReference>
<dbReference type="PANTHER" id="PTHR11098">
    <property type="entry name" value="NICOTINATE PHOSPHORIBOSYLTRANSFERASE"/>
    <property type="match status" value="1"/>
</dbReference>
<dbReference type="PANTHER" id="PTHR11098:SF1">
    <property type="entry name" value="NICOTINATE PHOSPHORIBOSYLTRANSFERASE"/>
    <property type="match status" value="1"/>
</dbReference>
<dbReference type="Pfam" id="PF04095">
    <property type="entry name" value="NAPRTase"/>
    <property type="match status" value="1"/>
</dbReference>
<dbReference type="Pfam" id="PF17767">
    <property type="entry name" value="NAPRTase_N"/>
    <property type="match status" value="1"/>
</dbReference>
<dbReference type="PIRSF" id="PIRSF000484">
    <property type="entry name" value="NAPRT"/>
    <property type="match status" value="1"/>
</dbReference>
<dbReference type="SUPFAM" id="SSF51690">
    <property type="entry name" value="Nicotinate/Quinolinate PRTase C-terminal domain-like"/>
    <property type="match status" value="1"/>
</dbReference>
<dbReference type="SUPFAM" id="SSF54675">
    <property type="entry name" value="Nicotinate/Quinolinate PRTase N-terminal domain-like"/>
    <property type="match status" value="1"/>
</dbReference>
<comment type="function">
    <text evidence="1">Catalyzes the synthesis of beta-nicotinate D-ribonucleotide from nicotinate and 5-phospho-D-ribose 1-phosphate at the expense of ATP.</text>
</comment>
<comment type="catalytic activity">
    <reaction evidence="1">
        <text>nicotinate + 5-phospho-alpha-D-ribose 1-diphosphate + ATP + H2O = nicotinate beta-D-ribonucleotide + ADP + phosphate + diphosphate</text>
        <dbReference type="Rhea" id="RHEA:36163"/>
        <dbReference type="ChEBI" id="CHEBI:15377"/>
        <dbReference type="ChEBI" id="CHEBI:30616"/>
        <dbReference type="ChEBI" id="CHEBI:32544"/>
        <dbReference type="ChEBI" id="CHEBI:33019"/>
        <dbReference type="ChEBI" id="CHEBI:43474"/>
        <dbReference type="ChEBI" id="CHEBI:57502"/>
        <dbReference type="ChEBI" id="CHEBI:58017"/>
        <dbReference type="ChEBI" id="CHEBI:456216"/>
        <dbReference type="EC" id="6.3.4.21"/>
    </reaction>
</comment>
<comment type="pathway">
    <text evidence="1">Cofactor biosynthesis; NAD(+) biosynthesis; nicotinate D-ribonucleotide from nicotinate: step 1/1.</text>
</comment>
<comment type="PTM">
    <text evidence="1">Transiently phosphorylated on a His residue during the reaction cycle. Phosphorylation strongly increases the affinity for substrates and increases the rate of nicotinate D-ribonucleotide production. Dephosphorylation regenerates the low-affinity form of the enzyme, leading to product release.</text>
</comment>
<comment type="similarity">
    <text evidence="1">Belongs to the NAPRTase family.</text>
</comment>
<keyword id="KW-0436">Ligase</keyword>
<keyword id="KW-0597">Phosphoprotein</keyword>
<keyword id="KW-0662">Pyridine nucleotide biosynthesis</keyword>
<keyword id="KW-1185">Reference proteome</keyword>
<organism>
    <name type="scientific">Neisseria gonorrhoeae (strain ATCC 700825 / FA 1090)</name>
    <dbReference type="NCBI Taxonomy" id="242231"/>
    <lineage>
        <taxon>Bacteria</taxon>
        <taxon>Pseudomonadati</taxon>
        <taxon>Pseudomonadota</taxon>
        <taxon>Betaproteobacteria</taxon>
        <taxon>Neisseriales</taxon>
        <taxon>Neisseriaceae</taxon>
        <taxon>Neisseria</taxon>
    </lineage>
</organism>
<sequence length="402" mass="46265">MTGIIHSLLDTDLYKFTMLQVVLHQFPQTHSLYEFRCRNVSTVYPLADIREDLEAELDALCRLRFTHDELGYLRSLRFIKSDFVDYLELFQLQRRFVEVGTDDKGRLNIRIEGPMIQAMFFEIFILAIVNELYFRRLETPAVIEEGERRLQAKAARLKEIAAAQNPDEPPFLISDFGTRRRYKLAWQEHVIRTLLEAAPSIVRGTSNVYLAKKLGITPIGTMAHEFLQAFQALDVRLRNFQKAALESWVHEYRGDLGVALTDVVGMDAFLRDFDLYFAKLFDGLRHDSGDPYVWGDKAYAHYQKLKIDSRTKMLTFSDGLDIERSWALHQYFKGRFKTGFGIGTNLTNDMGHTPLNIVLKLVECNGQSVAKLSDSPGKTMTNNSTFLAYLRQVFGIPEPRTP</sequence>
<accession>Q5F836</accession>
<proteinExistence type="inferred from homology"/>
<reference key="1">
    <citation type="submission" date="2003-03" db="EMBL/GenBank/DDBJ databases">
        <title>The complete genome sequence of Neisseria gonorrhoeae.</title>
        <authorList>
            <person name="Lewis L.A."/>
            <person name="Gillaspy A.F."/>
            <person name="McLaughlin R.E."/>
            <person name="Gipson M."/>
            <person name="Ducey T.F."/>
            <person name="Ownbey T."/>
            <person name="Hartman K."/>
            <person name="Nydick C."/>
            <person name="Carson M.B."/>
            <person name="Vaughn J."/>
            <person name="Thomson C."/>
            <person name="Song L."/>
            <person name="Lin S."/>
            <person name="Yuan X."/>
            <person name="Najar F."/>
            <person name="Zhan M."/>
            <person name="Ren Q."/>
            <person name="Zhu H."/>
            <person name="Qi S."/>
            <person name="Kenton S.M."/>
            <person name="Lai H."/>
            <person name="White J.D."/>
            <person name="Clifton S."/>
            <person name="Roe B.A."/>
            <person name="Dyer D.W."/>
        </authorList>
    </citation>
    <scope>NUCLEOTIDE SEQUENCE [LARGE SCALE GENOMIC DNA]</scope>
    <source>
        <strain>ATCC 700825 / FA 1090</strain>
    </source>
</reference>
<evidence type="ECO:0000255" key="1">
    <source>
        <dbReference type="HAMAP-Rule" id="MF_00570"/>
    </source>
</evidence>
<gene>
    <name evidence="1" type="primary">pncB</name>
    <name type="ordered locus">NGO_0962</name>
</gene>
<feature type="chain" id="PRO_0000205832" description="Nicotinate phosphoribosyltransferase">
    <location>
        <begin position="1"/>
        <end position="402"/>
    </location>
</feature>
<feature type="modified residue" description="Phosphohistidine; by autocatalysis" evidence="1">
    <location>
        <position position="224"/>
    </location>
</feature>